<organism>
    <name type="scientific">Burkholderia pseudomallei (strain K96243)</name>
    <dbReference type="NCBI Taxonomy" id="272560"/>
    <lineage>
        <taxon>Bacteria</taxon>
        <taxon>Pseudomonadati</taxon>
        <taxon>Pseudomonadota</taxon>
        <taxon>Betaproteobacteria</taxon>
        <taxon>Burkholderiales</taxon>
        <taxon>Burkholderiaceae</taxon>
        <taxon>Burkholderia</taxon>
        <taxon>pseudomallei group</taxon>
    </lineage>
</organism>
<sequence length="193" mass="20105">MKSLFRPLIVVFVVLVAVTGLAYPAVMTVFGQAVFPAQANGSLIEKGGRVVGSALIGQQFDAPQYFWGRLSATSPMPYNAAGSGGSNLGPLNPALKDQVKSRLDALKAAGTDLSQPVPVDLVTASASGLDPEISPAAADYQVARVARARKMADADVRRLVADHTSGRQFGVLGEPRVNVLKLNLALDAAQAAH</sequence>
<proteinExistence type="inferred from homology"/>
<reference key="1">
    <citation type="journal article" date="2004" name="Proc. Natl. Acad. Sci. U.S.A.">
        <title>Genomic plasticity of the causative agent of melioidosis, Burkholderia pseudomallei.</title>
        <authorList>
            <person name="Holden M.T.G."/>
            <person name="Titball R.W."/>
            <person name="Peacock S.J."/>
            <person name="Cerdeno-Tarraga A.-M."/>
            <person name="Atkins T."/>
            <person name="Crossman L.C."/>
            <person name="Pitt T."/>
            <person name="Churcher C."/>
            <person name="Mungall K.L."/>
            <person name="Bentley S.D."/>
            <person name="Sebaihia M."/>
            <person name="Thomson N.R."/>
            <person name="Bason N."/>
            <person name="Beacham I.R."/>
            <person name="Brooks K."/>
            <person name="Brown K.A."/>
            <person name="Brown N.F."/>
            <person name="Challis G.L."/>
            <person name="Cherevach I."/>
            <person name="Chillingworth T."/>
            <person name="Cronin A."/>
            <person name="Crossett B."/>
            <person name="Davis P."/>
            <person name="DeShazer D."/>
            <person name="Feltwell T."/>
            <person name="Fraser A."/>
            <person name="Hance Z."/>
            <person name="Hauser H."/>
            <person name="Holroyd S."/>
            <person name="Jagels K."/>
            <person name="Keith K.E."/>
            <person name="Maddison M."/>
            <person name="Moule S."/>
            <person name="Price C."/>
            <person name="Quail M.A."/>
            <person name="Rabbinowitsch E."/>
            <person name="Rutherford K."/>
            <person name="Sanders M."/>
            <person name="Simmonds M."/>
            <person name="Songsivilai S."/>
            <person name="Stevens K."/>
            <person name="Tumapa S."/>
            <person name="Vesaratchavest M."/>
            <person name="Whitehead S."/>
            <person name="Yeats C."/>
            <person name="Barrell B.G."/>
            <person name="Oyston P.C.F."/>
            <person name="Parkhill J."/>
        </authorList>
    </citation>
    <scope>NUCLEOTIDE SEQUENCE [LARGE SCALE GENOMIC DNA]</scope>
    <source>
        <strain>K96243</strain>
    </source>
</reference>
<evidence type="ECO:0000255" key="1">
    <source>
        <dbReference type="HAMAP-Rule" id="MF_00276"/>
    </source>
</evidence>
<gene>
    <name evidence="1" type="primary">kdpC</name>
    <name type="ordered locus">BPSL1173</name>
</gene>
<dbReference type="EMBL" id="BX571965">
    <property type="protein sequence ID" value="CAH35168.1"/>
    <property type="molecule type" value="Genomic_DNA"/>
</dbReference>
<dbReference type="RefSeq" id="WP_004186443.1">
    <property type="nucleotide sequence ID" value="NZ_CP009538.1"/>
</dbReference>
<dbReference type="RefSeq" id="YP_107795.1">
    <property type="nucleotide sequence ID" value="NC_006350.1"/>
</dbReference>
<dbReference type="SMR" id="Q63VS1"/>
<dbReference type="STRING" id="272560.BPSL1173"/>
<dbReference type="GeneID" id="93059654"/>
<dbReference type="KEGG" id="bps:BPSL1173"/>
<dbReference type="PATRIC" id="fig|272560.51.peg.361"/>
<dbReference type="eggNOG" id="COG2156">
    <property type="taxonomic scope" value="Bacteria"/>
</dbReference>
<dbReference type="Proteomes" id="UP000000605">
    <property type="component" value="Chromosome 1"/>
</dbReference>
<dbReference type="GO" id="GO:0005886">
    <property type="term" value="C:plasma membrane"/>
    <property type="evidence" value="ECO:0007669"/>
    <property type="project" value="UniProtKB-SubCell"/>
</dbReference>
<dbReference type="GO" id="GO:0005524">
    <property type="term" value="F:ATP binding"/>
    <property type="evidence" value="ECO:0007669"/>
    <property type="project" value="UniProtKB-UniRule"/>
</dbReference>
<dbReference type="GO" id="GO:0008556">
    <property type="term" value="F:P-type potassium transmembrane transporter activity"/>
    <property type="evidence" value="ECO:0007669"/>
    <property type="project" value="InterPro"/>
</dbReference>
<dbReference type="HAMAP" id="MF_00276">
    <property type="entry name" value="KdpC"/>
    <property type="match status" value="1"/>
</dbReference>
<dbReference type="InterPro" id="IPR003820">
    <property type="entry name" value="KdpC"/>
</dbReference>
<dbReference type="NCBIfam" id="TIGR00681">
    <property type="entry name" value="kdpC"/>
    <property type="match status" value="1"/>
</dbReference>
<dbReference type="NCBIfam" id="NF001454">
    <property type="entry name" value="PRK00315.1"/>
    <property type="match status" value="1"/>
</dbReference>
<dbReference type="PANTHER" id="PTHR30042">
    <property type="entry name" value="POTASSIUM-TRANSPORTING ATPASE C CHAIN"/>
    <property type="match status" value="1"/>
</dbReference>
<dbReference type="PANTHER" id="PTHR30042:SF2">
    <property type="entry name" value="POTASSIUM-TRANSPORTING ATPASE KDPC SUBUNIT"/>
    <property type="match status" value="1"/>
</dbReference>
<dbReference type="Pfam" id="PF02669">
    <property type="entry name" value="KdpC"/>
    <property type="match status" value="1"/>
</dbReference>
<dbReference type="PIRSF" id="PIRSF001296">
    <property type="entry name" value="K_ATPase_KdpC"/>
    <property type="match status" value="1"/>
</dbReference>
<keyword id="KW-0067">ATP-binding</keyword>
<keyword id="KW-0997">Cell inner membrane</keyword>
<keyword id="KW-1003">Cell membrane</keyword>
<keyword id="KW-0406">Ion transport</keyword>
<keyword id="KW-0472">Membrane</keyword>
<keyword id="KW-0547">Nucleotide-binding</keyword>
<keyword id="KW-0630">Potassium</keyword>
<keyword id="KW-0633">Potassium transport</keyword>
<keyword id="KW-1185">Reference proteome</keyword>
<keyword id="KW-0812">Transmembrane</keyword>
<keyword id="KW-1133">Transmembrane helix</keyword>
<keyword id="KW-0813">Transport</keyword>
<name>KDPC_BURPS</name>
<protein>
    <recommendedName>
        <fullName evidence="1">Potassium-transporting ATPase KdpC subunit</fullName>
    </recommendedName>
    <alternativeName>
        <fullName evidence="1">ATP phosphohydrolase [potassium-transporting] C chain</fullName>
    </alternativeName>
    <alternativeName>
        <fullName evidence="1">Potassium-binding and translocating subunit C</fullName>
    </alternativeName>
    <alternativeName>
        <fullName evidence="1">Potassium-translocating ATPase C chain</fullName>
    </alternativeName>
</protein>
<feature type="chain" id="PRO_1000022276" description="Potassium-transporting ATPase KdpC subunit">
    <location>
        <begin position="1"/>
        <end position="193"/>
    </location>
</feature>
<feature type="transmembrane region" description="Helical" evidence="1">
    <location>
        <begin position="7"/>
        <end position="27"/>
    </location>
</feature>
<accession>Q63VS1</accession>
<comment type="function">
    <text evidence="1">Part of the high-affinity ATP-driven potassium transport (or Kdp) system, which catalyzes the hydrolysis of ATP coupled with the electrogenic transport of potassium into the cytoplasm. This subunit acts as a catalytic chaperone that increases the ATP-binding affinity of the ATP-hydrolyzing subunit KdpB by the formation of a transient KdpB/KdpC/ATP ternary complex.</text>
</comment>
<comment type="subunit">
    <text evidence="1">The system is composed of three essential subunits: KdpA, KdpB and KdpC.</text>
</comment>
<comment type="subcellular location">
    <subcellularLocation>
        <location evidence="1">Cell inner membrane</location>
        <topology evidence="1">Single-pass membrane protein</topology>
    </subcellularLocation>
</comment>
<comment type="similarity">
    <text evidence="1">Belongs to the KdpC family.</text>
</comment>